<dbReference type="EMBL" id="AE016825">
    <property type="protein sequence ID" value="AAQ58345.1"/>
    <property type="molecule type" value="Genomic_DNA"/>
</dbReference>
<dbReference type="RefSeq" id="WP_011134224.1">
    <property type="nucleotide sequence ID" value="NC_005085.1"/>
</dbReference>
<dbReference type="SMR" id="Q7P098"/>
<dbReference type="STRING" id="243365.CV_0669"/>
<dbReference type="KEGG" id="cvi:CV_0669"/>
<dbReference type="eggNOG" id="COG0712">
    <property type="taxonomic scope" value="Bacteria"/>
</dbReference>
<dbReference type="HOGENOM" id="CLU_085114_3_0_4"/>
<dbReference type="OrthoDB" id="9816221at2"/>
<dbReference type="Proteomes" id="UP000001424">
    <property type="component" value="Chromosome"/>
</dbReference>
<dbReference type="GO" id="GO:0005886">
    <property type="term" value="C:plasma membrane"/>
    <property type="evidence" value="ECO:0007669"/>
    <property type="project" value="UniProtKB-SubCell"/>
</dbReference>
<dbReference type="GO" id="GO:0045259">
    <property type="term" value="C:proton-transporting ATP synthase complex"/>
    <property type="evidence" value="ECO:0007669"/>
    <property type="project" value="UniProtKB-KW"/>
</dbReference>
<dbReference type="GO" id="GO:0046933">
    <property type="term" value="F:proton-transporting ATP synthase activity, rotational mechanism"/>
    <property type="evidence" value="ECO:0007669"/>
    <property type="project" value="UniProtKB-UniRule"/>
</dbReference>
<dbReference type="Gene3D" id="1.10.520.20">
    <property type="entry name" value="N-terminal domain of the delta subunit of the F1F0-ATP synthase"/>
    <property type="match status" value="1"/>
</dbReference>
<dbReference type="HAMAP" id="MF_01416">
    <property type="entry name" value="ATP_synth_delta_bact"/>
    <property type="match status" value="1"/>
</dbReference>
<dbReference type="InterPro" id="IPR026015">
    <property type="entry name" value="ATP_synth_OSCP/delta_N_sf"/>
</dbReference>
<dbReference type="InterPro" id="IPR000711">
    <property type="entry name" value="ATPase_OSCP/dsu"/>
</dbReference>
<dbReference type="NCBIfam" id="TIGR01145">
    <property type="entry name" value="ATP_synt_delta"/>
    <property type="match status" value="1"/>
</dbReference>
<dbReference type="NCBIfam" id="NF004402">
    <property type="entry name" value="PRK05758.2-2"/>
    <property type="match status" value="1"/>
</dbReference>
<dbReference type="PANTHER" id="PTHR11910">
    <property type="entry name" value="ATP SYNTHASE DELTA CHAIN"/>
    <property type="match status" value="1"/>
</dbReference>
<dbReference type="Pfam" id="PF00213">
    <property type="entry name" value="OSCP"/>
    <property type="match status" value="1"/>
</dbReference>
<dbReference type="PRINTS" id="PR00125">
    <property type="entry name" value="ATPASEDELTA"/>
</dbReference>
<dbReference type="SUPFAM" id="SSF47928">
    <property type="entry name" value="N-terminal domain of the delta subunit of the F1F0-ATP synthase"/>
    <property type="match status" value="1"/>
</dbReference>
<feature type="chain" id="PRO_0000370941" description="ATP synthase subunit delta">
    <location>
        <begin position="1"/>
        <end position="178"/>
    </location>
</feature>
<accession>Q7P098</accession>
<protein>
    <recommendedName>
        <fullName evidence="1">ATP synthase subunit delta</fullName>
    </recommendedName>
    <alternativeName>
        <fullName evidence="1">ATP synthase F(1) sector subunit delta</fullName>
    </alternativeName>
    <alternativeName>
        <fullName evidence="1">F-type ATPase subunit delta</fullName>
        <shortName evidence="1">F-ATPase subunit delta</shortName>
    </alternativeName>
</protein>
<gene>
    <name evidence="1" type="primary">atpH</name>
    <name type="ordered locus">CV_0669</name>
</gene>
<comment type="function">
    <text evidence="1">F(1)F(0) ATP synthase produces ATP from ADP in the presence of a proton or sodium gradient. F-type ATPases consist of two structural domains, F(1) containing the extramembraneous catalytic core and F(0) containing the membrane proton channel, linked together by a central stalk and a peripheral stalk. During catalysis, ATP synthesis in the catalytic domain of F(1) is coupled via a rotary mechanism of the central stalk subunits to proton translocation.</text>
</comment>
<comment type="function">
    <text evidence="1">This protein is part of the stalk that links CF(0) to CF(1). It either transmits conformational changes from CF(0) to CF(1) or is implicated in proton conduction.</text>
</comment>
<comment type="subunit">
    <text evidence="1">F-type ATPases have 2 components, F(1) - the catalytic core - and F(0) - the membrane proton channel. F(1) has five subunits: alpha(3), beta(3), gamma(1), delta(1), epsilon(1). F(0) has three main subunits: a(1), b(2) and c(10-14). The alpha and beta chains form an alternating ring which encloses part of the gamma chain. F(1) is attached to F(0) by a central stalk formed by the gamma and epsilon chains, while a peripheral stalk is formed by the delta and b chains.</text>
</comment>
<comment type="subcellular location">
    <subcellularLocation>
        <location evidence="1">Cell inner membrane</location>
        <topology evidence="1">Peripheral membrane protein</topology>
    </subcellularLocation>
</comment>
<comment type="similarity">
    <text evidence="1">Belongs to the ATPase delta chain family.</text>
</comment>
<organism>
    <name type="scientific">Chromobacterium violaceum (strain ATCC 12472 / DSM 30191 / JCM 1249 / CCUG 213 / NBRC 12614 / NCIMB 9131 / NCTC 9757 / MK)</name>
    <dbReference type="NCBI Taxonomy" id="243365"/>
    <lineage>
        <taxon>Bacteria</taxon>
        <taxon>Pseudomonadati</taxon>
        <taxon>Pseudomonadota</taxon>
        <taxon>Betaproteobacteria</taxon>
        <taxon>Neisseriales</taxon>
        <taxon>Chromobacteriaceae</taxon>
        <taxon>Chromobacterium</taxon>
    </lineage>
</organism>
<name>ATPD_CHRVO</name>
<sequence>MAELITVARPYAEAVYSLATEQGKLDQWSDALSWLAAMVNNPDLAQVVTNPKHTAQEVEALMLDVLGSRGNDDVKRFIAALIENARLTLLPEIAAQFELLKAQSENIVDALVESAFALSDEQKAELTNTLSKKYGKAVRLDVRENADLIGGVRVSVGDDVIDASVRGKLQAMAASLKN</sequence>
<reference key="1">
    <citation type="journal article" date="2003" name="Proc. Natl. Acad. Sci. U.S.A.">
        <title>The complete genome sequence of Chromobacterium violaceum reveals remarkable and exploitable bacterial adaptability.</title>
        <authorList>
            <person name="Vasconcelos A.T.R."/>
            <person name="de Almeida D.F."/>
            <person name="Hungria M."/>
            <person name="Guimaraes C.T."/>
            <person name="Antonio R.V."/>
            <person name="Almeida F.C."/>
            <person name="de Almeida L.G.P."/>
            <person name="de Almeida R."/>
            <person name="Alves-Gomes J.A."/>
            <person name="Andrade E.M."/>
            <person name="Araripe J."/>
            <person name="de Araujo M.F.F."/>
            <person name="Astolfi-Filho S."/>
            <person name="Azevedo V."/>
            <person name="Baptista A.J."/>
            <person name="Bataus L.A.M."/>
            <person name="Batista J.S."/>
            <person name="Belo A."/>
            <person name="van den Berg C."/>
            <person name="Bogo M."/>
            <person name="Bonatto S."/>
            <person name="Bordignon J."/>
            <person name="Brigido M.M."/>
            <person name="Brito C.A."/>
            <person name="Brocchi M."/>
            <person name="Burity H.A."/>
            <person name="Camargo A.A."/>
            <person name="Cardoso D.D.P."/>
            <person name="Carneiro N.P."/>
            <person name="Carraro D.M."/>
            <person name="Carvalho C.M.B."/>
            <person name="Cascardo J.C.M."/>
            <person name="Cavada B.S."/>
            <person name="Chueire L.M.O."/>
            <person name="Creczynski-Pasa T.B."/>
            <person name="Cunha-Junior N.C."/>
            <person name="Fagundes N."/>
            <person name="Falcao C.L."/>
            <person name="Fantinatti F."/>
            <person name="Farias I.P."/>
            <person name="Felipe M.S.S."/>
            <person name="Ferrari L.P."/>
            <person name="Ferro J.A."/>
            <person name="Ferro M.I.T."/>
            <person name="Franco G.R."/>
            <person name="Freitas N.S.A."/>
            <person name="Furlan L.R."/>
            <person name="Gazzinelli R.T."/>
            <person name="Gomes E.A."/>
            <person name="Goncalves P.R."/>
            <person name="Grangeiro T.B."/>
            <person name="Grattapaglia D."/>
            <person name="Grisard E.C."/>
            <person name="Hanna E.S."/>
            <person name="Jardim S.N."/>
            <person name="Laurino J."/>
            <person name="Leoi L.C.T."/>
            <person name="Lima L.F.A."/>
            <person name="Loureiro M.F."/>
            <person name="Lyra M.C.C.P."/>
            <person name="Madeira H.M.F."/>
            <person name="Manfio G.P."/>
            <person name="Maranhao A.Q."/>
            <person name="Martins W.S."/>
            <person name="di Mauro S.M.Z."/>
            <person name="de Medeiros S.R.B."/>
            <person name="Meissner R.V."/>
            <person name="Moreira M.A.M."/>
            <person name="Nascimento F.F."/>
            <person name="Nicolas M.F."/>
            <person name="Oliveira J.G."/>
            <person name="Oliveira S.C."/>
            <person name="Paixao R.F.C."/>
            <person name="Parente J.A."/>
            <person name="Pedrosa F.O."/>
            <person name="Pena S.D.J."/>
            <person name="Pereira J.O."/>
            <person name="Pereira M."/>
            <person name="Pinto L.S.R.C."/>
            <person name="Pinto L.S."/>
            <person name="Porto J.I.R."/>
            <person name="Potrich D.P."/>
            <person name="Ramalho-Neto C.E."/>
            <person name="Reis A.M.M."/>
            <person name="Rigo L.U."/>
            <person name="Rondinelli E."/>
            <person name="Santos E.B.P."/>
            <person name="Santos F.R."/>
            <person name="Schneider M.P.C."/>
            <person name="Seuanez H.N."/>
            <person name="Silva A.M.R."/>
            <person name="da Silva A.L.C."/>
            <person name="Silva D.W."/>
            <person name="Silva R."/>
            <person name="Simoes I.C."/>
            <person name="Simon D."/>
            <person name="Soares C.M.A."/>
            <person name="Soares R.B.A."/>
            <person name="Souza E.M."/>
            <person name="Souza K.R.L."/>
            <person name="Souza R.C."/>
            <person name="Steffens M.B.R."/>
            <person name="Steindel M."/>
            <person name="Teixeira S.R."/>
            <person name="Urmenyi T."/>
            <person name="Vettore A."/>
            <person name="Wassem R."/>
            <person name="Zaha A."/>
            <person name="Simpson A.J.G."/>
        </authorList>
    </citation>
    <scope>NUCLEOTIDE SEQUENCE [LARGE SCALE GENOMIC DNA]</scope>
    <source>
        <strain>ATCC 12472 / DSM 30191 / JCM 1249 / CCUG 213 / NBRC 12614 / NCIMB 9131 / NCTC 9757 / MK</strain>
    </source>
</reference>
<proteinExistence type="inferred from homology"/>
<keyword id="KW-0066">ATP synthesis</keyword>
<keyword id="KW-0997">Cell inner membrane</keyword>
<keyword id="KW-1003">Cell membrane</keyword>
<keyword id="KW-0139">CF(1)</keyword>
<keyword id="KW-0375">Hydrogen ion transport</keyword>
<keyword id="KW-0406">Ion transport</keyword>
<keyword id="KW-0472">Membrane</keyword>
<keyword id="KW-1185">Reference proteome</keyword>
<keyword id="KW-0813">Transport</keyword>
<evidence type="ECO:0000255" key="1">
    <source>
        <dbReference type="HAMAP-Rule" id="MF_01416"/>
    </source>
</evidence>